<proteinExistence type="inferred from homology"/>
<reference key="1">
    <citation type="online journal article" date="1997" name="Plant Gene Register">
        <title>Phycoerythrin encoding gene from Porphyra tenera.</title>
        <authorList>
            <person name="Kim B.-K."/>
            <person name="Chung G.-H."/>
            <person name="Fujita Y."/>
        </authorList>
        <locator>PGR97-158</locator>
    </citation>
    <scope>NUCLEOTIDE SEQUENCE [GENOMIC DNA]</scope>
    <source>
        <strain>Minomi</strain>
    </source>
</reference>
<comment type="function">
    <text>Light-harvesting photosynthetic bile pigment-protein from the phycobiliprotein complex.</text>
</comment>
<comment type="subunit">
    <text evidence="1">Heterodimer of an alpha and a beta chain.</text>
</comment>
<comment type="subcellular location">
    <subcellularLocation>
        <location evidence="1">Plastid</location>
        <location evidence="1">Chloroplast thylakoid membrane</location>
        <topology evidence="1">Peripheral membrane protein</topology>
        <orientation evidence="1">Stromal side</orientation>
    </subcellularLocation>
    <text evidence="1">Forms the periphery of the phycobilisome rod.</text>
</comment>
<comment type="PTM">
    <text evidence="1">Contains two covalently linked phycoerythrobilin chromophores and one covalently linked phycourobilin chromophore.</text>
</comment>
<comment type="similarity">
    <text evidence="2">Belongs to the phycobiliprotein family.</text>
</comment>
<evidence type="ECO:0000250" key="1"/>
<evidence type="ECO:0000305" key="2"/>
<feature type="chain" id="PRO_0000199197" description="R-phycoerythrin beta chain">
    <location>
        <begin position="1"/>
        <end position="177"/>
    </location>
</feature>
<feature type="binding site" description="covalent" evidence="1">
    <location>
        <position position="50"/>
    </location>
    <ligand>
        <name>phycourobilin</name>
        <dbReference type="ChEBI" id="CHEBI:189062"/>
    </ligand>
</feature>
<feature type="binding site" description="covalent" evidence="1">
    <location>
        <position position="61"/>
    </location>
    <ligand>
        <name>phycourobilin</name>
        <dbReference type="ChEBI" id="CHEBI:189062"/>
    </ligand>
</feature>
<feature type="binding site" description="covalent" evidence="1">
    <location>
        <position position="82"/>
    </location>
    <ligand>
        <name>(2R,3E)-phycoerythrobilin</name>
        <dbReference type="ChEBI" id="CHEBI:85276"/>
        <label>1</label>
    </ligand>
</feature>
<feature type="binding site" description="covalent" evidence="1">
    <location>
        <position position="158"/>
    </location>
    <ligand>
        <name>(2R,3E)-phycoerythrobilin</name>
        <dbReference type="ChEBI" id="CHEBI:85276"/>
        <label>2</label>
    </ligand>
</feature>
<feature type="modified residue" description="N4-methylasparagine" evidence="1">
    <location>
        <position position="72"/>
    </location>
</feature>
<geneLocation type="chloroplast"/>
<keyword id="KW-0042">Antenna complex</keyword>
<keyword id="KW-0089">Bile pigment</keyword>
<keyword id="KW-0150">Chloroplast</keyword>
<keyword id="KW-0157">Chromophore</keyword>
<keyword id="KW-0249">Electron transport</keyword>
<keyword id="KW-0472">Membrane</keyword>
<keyword id="KW-0488">Methylation</keyword>
<keyword id="KW-0602">Photosynthesis</keyword>
<keyword id="KW-0605">Phycobilisome</keyword>
<keyword id="KW-0934">Plastid</keyword>
<keyword id="KW-0793">Thylakoid</keyword>
<keyword id="KW-0813">Transport</keyword>
<gene>
    <name type="primary">cpeB</name>
</gene>
<protein>
    <recommendedName>
        <fullName>R-phycoerythrin beta chain</fullName>
    </recommendedName>
</protein>
<accession>P68939</accession>
<accession>O20205</accession>
<accession>O49842</accession>
<organism>
    <name type="scientific">Pyropia tenera</name>
    <name type="common">Nori</name>
    <name type="synonym">Porphyra tenera</name>
    <dbReference type="NCBI Taxonomy" id="2785"/>
    <lineage>
        <taxon>Eukaryota</taxon>
        <taxon>Rhodophyta</taxon>
        <taxon>Bangiophyceae</taxon>
        <taxon>Bangiales</taxon>
        <taxon>Bangiaceae</taxon>
        <taxon>Pyropia</taxon>
    </lineage>
</organism>
<dbReference type="EMBL" id="D89877">
    <property type="protein sequence ID" value="BAA24199.1"/>
    <property type="molecule type" value="Genomic_DNA"/>
</dbReference>
<dbReference type="SMR" id="P68939"/>
<dbReference type="GO" id="GO:0009535">
    <property type="term" value="C:chloroplast thylakoid membrane"/>
    <property type="evidence" value="ECO:0007669"/>
    <property type="project" value="UniProtKB-SubCell"/>
</dbReference>
<dbReference type="GO" id="GO:0030089">
    <property type="term" value="C:phycobilisome"/>
    <property type="evidence" value="ECO:0007669"/>
    <property type="project" value="UniProtKB-KW"/>
</dbReference>
<dbReference type="GO" id="GO:0015979">
    <property type="term" value="P:photosynthesis"/>
    <property type="evidence" value="ECO:0007669"/>
    <property type="project" value="UniProtKB-KW"/>
</dbReference>
<dbReference type="CDD" id="cd14767">
    <property type="entry name" value="PE_beta-like"/>
    <property type="match status" value="1"/>
</dbReference>
<dbReference type="Gene3D" id="1.10.490.20">
    <property type="entry name" value="Phycocyanins"/>
    <property type="match status" value="1"/>
</dbReference>
<dbReference type="InterPro" id="IPR009050">
    <property type="entry name" value="Globin-like_sf"/>
</dbReference>
<dbReference type="InterPro" id="IPR012128">
    <property type="entry name" value="Phycobilisome_asu/bsu"/>
</dbReference>
<dbReference type="InterPro" id="IPR038719">
    <property type="entry name" value="Phycobilisome_asu/bsu_sf"/>
</dbReference>
<dbReference type="PANTHER" id="PTHR34011:SF7">
    <property type="entry name" value="C-PHYCOCYANIN BETA SUBUNIT"/>
    <property type="match status" value="1"/>
</dbReference>
<dbReference type="PANTHER" id="PTHR34011">
    <property type="entry name" value="PHYCOBILISOME 32.1 KDA LINKER POLYPEPTIDE, PHYCOCYANIN-ASSOCIATED, ROD 2-RELATED"/>
    <property type="match status" value="1"/>
</dbReference>
<dbReference type="Pfam" id="PF00502">
    <property type="entry name" value="Phycobilisome"/>
    <property type="match status" value="1"/>
</dbReference>
<dbReference type="PIRSF" id="PIRSF000081">
    <property type="entry name" value="Phycocyanin"/>
    <property type="match status" value="1"/>
</dbReference>
<dbReference type="SUPFAM" id="SSF46458">
    <property type="entry name" value="Globin-like"/>
    <property type="match status" value="1"/>
</dbReference>
<name>PHEB_PYRTE</name>
<sequence length="177" mass="18423">MLDAFSRVVVNSDAKAAYVGGSDLQALKKFIADGNKRLDSVNAIVSNASCIVSDAVSGMICENPGLIAPGGNCYTNRRMAACLRDGEIILRYVSYALLAGDPSVLEDRCLNGLKETYIALGVPTNSSVRAVSIMKAAAVAFITNTASQRKMATADGDCSALASEVASYCDRVAAAIS</sequence>